<protein>
    <recommendedName>
        <fullName evidence="1">Protein Vpu</fullName>
    </recommendedName>
    <alternativeName>
        <fullName evidence="1">U ORF protein</fullName>
    </alternativeName>
    <alternativeName>
        <fullName evidence="1">Viral protein U</fullName>
    </alternativeName>
</protein>
<gene>
    <name evidence="1" type="primary">vpu</name>
</gene>
<evidence type="ECO:0000255" key="1">
    <source>
        <dbReference type="HAMAP-Rule" id="MF_04082"/>
    </source>
</evidence>
<accession>O91085</accession>
<feature type="chain" id="PRO_0000244330" description="Protein Vpu">
    <location>
        <begin position="1"/>
        <end position="83"/>
    </location>
</feature>
<feature type="topological domain" description="Extracellular" evidence="1">
    <location>
        <begin position="1"/>
        <end position="4"/>
    </location>
</feature>
<feature type="transmembrane region" description="Helical" evidence="1">
    <location>
        <begin position="5"/>
        <end position="25"/>
    </location>
</feature>
<feature type="topological domain" description="Cytoplasmic" evidence="1">
    <location>
        <begin position="26"/>
        <end position="83"/>
    </location>
</feature>
<feature type="modified residue" description="Phosphoserine; by host CK2" evidence="1">
    <location>
        <position position="50"/>
    </location>
</feature>
<feature type="modified residue" description="Phosphoserine; by host CK2" evidence="1">
    <location>
        <position position="54"/>
    </location>
</feature>
<organism>
    <name type="scientific">Human immunodeficiency virus type 1 group N (isolate YBF30)</name>
    <name type="common">HIV-1</name>
    <dbReference type="NCBI Taxonomy" id="388818"/>
    <lineage>
        <taxon>Viruses</taxon>
        <taxon>Riboviria</taxon>
        <taxon>Pararnavirae</taxon>
        <taxon>Artverviricota</taxon>
        <taxon>Revtraviricetes</taxon>
        <taxon>Ortervirales</taxon>
        <taxon>Retroviridae</taxon>
        <taxon>Orthoretrovirinae</taxon>
        <taxon>Lentivirus</taxon>
        <taxon>Human immunodeficiency virus type 1</taxon>
    </lineage>
</organism>
<comment type="function">
    <text evidence="1">Enhances virion budding by targeting host CD4 and Tetherin/BST2 to proteasome degradation. Degradation of CD4 prevents any unwanted premature interactions between viral Env and its host receptor CD4 in the endoplasmic reticulum. Degradation of antiretroviral protein Tetherin/BST2 is important for virion budding, as BST2 tethers new viral particles to the host cell membrane. Mechanistically, Vpu bridges either CD4 or BST2 to BTRC, a substrate recognition subunit of the Skp1/Cullin/F-box protein E3 ubiquitin ligase, induces their ubiquitination and subsequent proteasomal degradation. The alteration of the E3 ligase specificity by Vpu seems to promote the degradation of host IKBKB, leading to NF-kappa-B down-regulation and subsequent apoptosis. Acts as a viroporin that forms an oligomeric ion channel in membranes. Modulates the host DNA repair mechanisms to promote degradation of nuclear viral cDNA in cells that are already productively infected in order to suppress immune sensing and proviral hyper-integration (superinfection). Manipulates PML-NBs and modulates SUMOylation of host BLM protein thereby enhancing its DNA-end processing activity toward viral unintegrated linear DNA. Also inhibits RAD52-mediated homologous repair of viral cDNA, preventing the generation of dead-end circular forms of single copies of the long terminal repeat and permitting sustained nucleolytic attack.</text>
</comment>
<comment type="activity regulation">
    <text evidence="1">Ion channel activity is inhibited by hexamethylene amiloride in vitro.</text>
</comment>
<comment type="subunit">
    <text evidence="1">Homopentamer. Interacts with host CD4 and BRTC; these interactions induce proteasomal degradation of CD4. Interacts with host BST2; this interaction leads to the degradation of host BST2. Interacts with host FBXW11. Interacts with host AP1M1; this interaction plays a role in the mistrafficking and subsequent degradation of host BST2. Interacts with host RANBP2; this interaction allows Vpu to down-regulate host BLM sumoylation.</text>
</comment>
<comment type="subcellular location">
    <subcellularLocation>
        <location evidence="1">Host membrane</location>
        <topology evidence="1">Single-pass type I membrane protein</topology>
    </subcellularLocation>
</comment>
<comment type="domain">
    <text evidence="1">The N-terminus and transmembrane domains are required for self-oligomerization and proper virion budding, whereas the cytoplasmic domain is required for CD4 degradation. The cytoplasmic domain is composed of 2 amphipathic alpha helix that form a U-shape.</text>
</comment>
<comment type="PTM">
    <text evidence="1">Phosphorylated by host CK2. This phosphorylation is necessary for interaction with human BTRC and degradation of CD4.</text>
</comment>
<comment type="miscellaneous">
    <text evidence="1">HIV-1 lineages are divided in three main groups, M (for Major), O (for Outlier), and N (for New, or Non-M, Non-O). The vast majority of strains found worldwide belong to the group M. Group O seems to be endemic to and largely confined to Cameroon and neighboring countries in West Central Africa, where these viruses represent a small minority of HIV-1 strains. The group N is represented by a limited number of isolates from Cameroonian persons. The group M is further subdivided in 9 clades or subtypes (A to D, F to H, J and K).</text>
</comment>
<comment type="similarity">
    <text evidence="1">Belongs to the HIV-1 VPU protein family.</text>
</comment>
<keyword id="KW-0014">AIDS</keyword>
<keyword id="KW-0053">Apoptosis</keyword>
<keyword id="KW-1043">Host membrane</keyword>
<keyword id="KW-0945">Host-virus interaction</keyword>
<keyword id="KW-1090">Inhibition of host innate immune response by virus</keyword>
<keyword id="KW-1084">Inhibition of host tetherin by virus</keyword>
<keyword id="KW-0407">Ion channel</keyword>
<keyword id="KW-0406">Ion transport</keyword>
<keyword id="KW-0472">Membrane</keyword>
<keyword id="KW-0597">Phosphoprotein</keyword>
<keyword id="KW-1185">Reference proteome</keyword>
<keyword id="KW-0812">Transmembrane</keyword>
<keyword id="KW-1133">Transmembrane helix</keyword>
<keyword id="KW-0813">Transport</keyword>
<keyword id="KW-0899">Viral immunoevasion</keyword>
<reference key="1">
    <citation type="journal article" date="1998" name="Nat. Med.">
        <title>Identification of a new human immunodeficiency virus type 1 distinct from group M and group O.</title>
        <authorList>
            <person name="Simon F."/>
            <person name="Mauclere P."/>
            <person name="Roques P."/>
            <person name="Loussert-Ajaka I."/>
            <person name="Muller-Trutwin M.C."/>
            <person name="Saragosti S."/>
            <person name="Georges-Courbot M.C."/>
            <person name="Barre-Sinoussi F."/>
            <person name="Brun-Vezinet F."/>
        </authorList>
    </citation>
    <scope>NUCLEOTIDE SEQUENCE [GENOMIC DNA]</scope>
</reference>
<dbReference type="EMBL" id="AJ006022">
    <property type="protein sequence ID" value="CAA06815.1"/>
    <property type="molecule type" value="Genomic_DNA"/>
</dbReference>
<dbReference type="Proteomes" id="UP000007420">
    <property type="component" value="Segment"/>
</dbReference>
<dbReference type="GO" id="GO:0033644">
    <property type="term" value="C:host cell membrane"/>
    <property type="evidence" value="ECO:0007669"/>
    <property type="project" value="UniProtKB-SubCell"/>
</dbReference>
<dbReference type="GO" id="GO:0016020">
    <property type="term" value="C:membrane"/>
    <property type="evidence" value="ECO:0007669"/>
    <property type="project" value="UniProtKB-UniRule"/>
</dbReference>
<dbReference type="GO" id="GO:0042609">
    <property type="term" value="F:CD4 receptor binding"/>
    <property type="evidence" value="ECO:0007669"/>
    <property type="project" value="UniProtKB-UniRule"/>
</dbReference>
<dbReference type="GO" id="GO:0005261">
    <property type="term" value="F:monoatomic cation channel activity"/>
    <property type="evidence" value="ECO:0007669"/>
    <property type="project" value="UniProtKB-UniRule"/>
</dbReference>
<dbReference type="GO" id="GO:0032801">
    <property type="term" value="P:receptor catabolic process"/>
    <property type="evidence" value="ECO:0007669"/>
    <property type="project" value="UniProtKB-UniRule"/>
</dbReference>
<dbReference type="GO" id="GO:0052170">
    <property type="term" value="P:symbiont-mediated suppression of host innate immune response"/>
    <property type="evidence" value="ECO:0007669"/>
    <property type="project" value="UniProtKB-KW"/>
</dbReference>
<dbReference type="GO" id="GO:0039502">
    <property type="term" value="P:symbiont-mediated suppression of host type I interferon-mediated signaling pathway"/>
    <property type="evidence" value="ECO:0007669"/>
    <property type="project" value="UniProtKB-UniRule"/>
</dbReference>
<dbReference type="GO" id="GO:0039587">
    <property type="term" value="P:symbiont-mediated-mediated suppression of host tetherin activity"/>
    <property type="evidence" value="ECO:0007669"/>
    <property type="project" value="UniProtKB-UniRule"/>
</dbReference>
<dbReference type="GO" id="GO:0019076">
    <property type="term" value="P:viral release from host cell"/>
    <property type="evidence" value="ECO:0007669"/>
    <property type="project" value="UniProtKB-UniRule"/>
</dbReference>
<dbReference type="Gene3D" id="1.10.195.10">
    <property type="entry name" value="HIV-1 VPU cytoplasmic domain"/>
    <property type="match status" value="1"/>
</dbReference>
<dbReference type="HAMAP" id="MF_04082">
    <property type="entry name" value="HIV_VPU"/>
    <property type="match status" value="1"/>
</dbReference>
<dbReference type="InterPro" id="IPR008187">
    <property type="entry name" value="Vpu"/>
</dbReference>
<dbReference type="InterPro" id="IPR009032">
    <property type="entry name" value="Vpu_cyt_dom_sf"/>
</dbReference>
<dbReference type="Pfam" id="PF00558">
    <property type="entry name" value="Vpu"/>
    <property type="match status" value="1"/>
</dbReference>
<dbReference type="SUPFAM" id="SSF57647">
    <property type="entry name" value="HIV-1 VPU cytoplasmic domain"/>
    <property type="match status" value="1"/>
</dbReference>
<sequence>MLSLGFIALGAAVSIAVIVWALLYREYKKIKLQEKIKHIRQRIREREEDSGNESDGDAEWLDGDEEWLVTLLSSSKLDQGNWV</sequence>
<proteinExistence type="inferred from homology"/>
<name>VPU_HV1YF</name>
<organismHost>
    <name type="scientific">Homo sapiens</name>
    <name type="common">Human</name>
    <dbReference type="NCBI Taxonomy" id="9606"/>
</organismHost>